<dbReference type="EMBL" id="U24176">
    <property type="protein sequence ID" value="AAA79339.1"/>
    <property type="molecule type" value="Genomic_DNA"/>
</dbReference>
<dbReference type="EMBL" id="AE006468">
    <property type="protein sequence ID" value="AAL19053.1"/>
    <property type="molecule type" value="Genomic_DNA"/>
</dbReference>
<dbReference type="RefSeq" id="NP_459094.1">
    <property type="nucleotide sequence ID" value="NC_003197.2"/>
</dbReference>
<dbReference type="RefSeq" id="WP_000610894.1">
    <property type="nucleotide sequence ID" value="NC_003197.2"/>
</dbReference>
<dbReference type="SMR" id="Q56017"/>
<dbReference type="STRING" id="99287.STM0089"/>
<dbReference type="PaxDb" id="99287-STM0089"/>
<dbReference type="GeneID" id="1251607"/>
<dbReference type="GeneID" id="66754612"/>
<dbReference type="KEGG" id="stm:STM0089"/>
<dbReference type="PATRIC" id="fig|99287.12.peg.92"/>
<dbReference type="HOGENOM" id="CLU_128074_0_0_6"/>
<dbReference type="OMA" id="MRGEYFC"/>
<dbReference type="PhylomeDB" id="Q56017"/>
<dbReference type="BioCyc" id="SENT99287:STM0089-MONOMER"/>
<dbReference type="Proteomes" id="UP000001014">
    <property type="component" value="Chromosome"/>
</dbReference>
<dbReference type="GO" id="GO:0070987">
    <property type="term" value="P:error-free translesion synthesis"/>
    <property type="evidence" value="ECO:0000318"/>
    <property type="project" value="GO_Central"/>
</dbReference>
<dbReference type="Gene3D" id="2.60.40.1470">
    <property type="entry name" value="ApaG domain"/>
    <property type="match status" value="1"/>
</dbReference>
<dbReference type="HAMAP" id="MF_00791">
    <property type="entry name" value="ApaG"/>
    <property type="match status" value="1"/>
</dbReference>
<dbReference type="InterPro" id="IPR007474">
    <property type="entry name" value="ApaG_domain"/>
</dbReference>
<dbReference type="InterPro" id="IPR036767">
    <property type="entry name" value="ApaG_sf"/>
</dbReference>
<dbReference type="InterPro" id="IPR023065">
    <property type="entry name" value="Uncharacterised_ApaG"/>
</dbReference>
<dbReference type="NCBIfam" id="NF003967">
    <property type="entry name" value="PRK05461.1"/>
    <property type="match status" value="1"/>
</dbReference>
<dbReference type="PANTHER" id="PTHR14289">
    <property type="entry name" value="F-BOX ONLY PROTEIN 3"/>
    <property type="match status" value="1"/>
</dbReference>
<dbReference type="PANTHER" id="PTHR14289:SF16">
    <property type="entry name" value="POLYMERASE DELTA-INTERACTING PROTEIN 2"/>
    <property type="match status" value="1"/>
</dbReference>
<dbReference type="Pfam" id="PF04379">
    <property type="entry name" value="DUF525"/>
    <property type="match status" value="1"/>
</dbReference>
<dbReference type="SUPFAM" id="SSF110069">
    <property type="entry name" value="ApaG-like"/>
    <property type="match status" value="1"/>
</dbReference>
<dbReference type="PROSITE" id="PS51087">
    <property type="entry name" value="APAG"/>
    <property type="match status" value="1"/>
</dbReference>
<protein>
    <recommendedName>
        <fullName>Protein ApaG</fullName>
    </recommendedName>
    <alternativeName>
        <fullName>Protein CorD</fullName>
    </alternativeName>
</protein>
<proteinExistence type="inferred from homology"/>
<sequence length="125" mass="13924">MINSPRVCIQVQSVYIEAQSSPDDERYVFAYTVTIRNLGRAPVQLLGRYWLITNGHGRETEVQGEGVVGVQPRIAPGEEYQYTSGAVIETPLGTMQGHYEMIDENGDAFTIDIPVFRLAVPTLIH</sequence>
<feature type="chain" id="PRO_0000197962" description="Protein ApaG">
    <location>
        <begin position="1"/>
        <end position="125"/>
    </location>
</feature>
<feature type="domain" description="ApaG">
    <location>
        <begin position="1"/>
        <end position="125"/>
    </location>
</feature>
<feature type="sequence conflict" description="In Ref. 1; AAA79339." evidence="1" ref="1">
    <original>V</original>
    <variation>I</variation>
    <location>
        <position position="87"/>
    </location>
</feature>
<gene>
    <name type="primary">apaG</name>
    <name type="synonym">corD</name>
    <name type="ordered locus">STM0089</name>
</gene>
<evidence type="ECO:0000305" key="1"/>
<organism>
    <name type="scientific">Salmonella typhimurium (strain LT2 / SGSC1412 / ATCC 700720)</name>
    <dbReference type="NCBI Taxonomy" id="99287"/>
    <lineage>
        <taxon>Bacteria</taxon>
        <taxon>Pseudomonadati</taxon>
        <taxon>Pseudomonadota</taxon>
        <taxon>Gammaproteobacteria</taxon>
        <taxon>Enterobacterales</taxon>
        <taxon>Enterobacteriaceae</taxon>
        <taxon>Salmonella</taxon>
    </lineage>
</organism>
<keyword id="KW-1185">Reference proteome</keyword>
<accession>Q56017</accession>
<reference key="1">
    <citation type="submission" date="1995-10" db="EMBL/GenBank/DDBJ databases">
        <authorList>
            <person name="Smith R.L."/>
            <person name="Ahuja D."/>
            <person name="Maguire M.E."/>
        </authorList>
    </citation>
    <scope>NUCLEOTIDE SEQUENCE [GENOMIC DNA]</scope>
    <source>
        <strain>LT2</strain>
    </source>
</reference>
<reference key="2">
    <citation type="journal article" date="2001" name="Nature">
        <title>Complete genome sequence of Salmonella enterica serovar Typhimurium LT2.</title>
        <authorList>
            <person name="McClelland M."/>
            <person name="Sanderson K.E."/>
            <person name="Spieth J."/>
            <person name="Clifton S.W."/>
            <person name="Latreille P."/>
            <person name="Courtney L."/>
            <person name="Porwollik S."/>
            <person name="Ali J."/>
            <person name="Dante M."/>
            <person name="Du F."/>
            <person name="Hou S."/>
            <person name="Layman D."/>
            <person name="Leonard S."/>
            <person name="Nguyen C."/>
            <person name="Scott K."/>
            <person name="Holmes A."/>
            <person name="Grewal N."/>
            <person name="Mulvaney E."/>
            <person name="Ryan E."/>
            <person name="Sun H."/>
            <person name="Florea L."/>
            <person name="Miller W."/>
            <person name="Stoneking T."/>
            <person name="Nhan M."/>
            <person name="Waterston R."/>
            <person name="Wilson R.K."/>
        </authorList>
    </citation>
    <scope>NUCLEOTIDE SEQUENCE [LARGE SCALE GENOMIC DNA]</scope>
    <source>
        <strain>LT2 / SGSC1412 / ATCC 700720</strain>
    </source>
</reference>
<comment type="function">
    <text>Not known; mutations in apaG/corD give a phenotype of low-level Co(2+) resistance. They also decrease Mg(2+) efflux but not influx via the CorA Mg(2+) transport system.</text>
</comment>
<name>APAG_SALTY</name>